<gene>
    <name evidence="1" type="primary">groEL</name>
    <name evidence="1" type="synonym">groL</name>
    <name type="ordered locus">Teth39_1721</name>
</gene>
<feature type="chain" id="PRO_1000130070" description="Chaperonin GroEL">
    <location>
        <begin position="1"/>
        <end position="541"/>
    </location>
</feature>
<feature type="binding site" evidence="1">
    <location>
        <begin position="29"/>
        <end position="32"/>
    </location>
    <ligand>
        <name>ATP</name>
        <dbReference type="ChEBI" id="CHEBI:30616"/>
    </ligand>
</feature>
<feature type="binding site" evidence="1">
    <location>
        <begin position="86"/>
        <end position="90"/>
    </location>
    <ligand>
        <name>ATP</name>
        <dbReference type="ChEBI" id="CHEBI:30616"/>
    </ligand>
</feature>
<feature type="binding site" evidence="1">
    <location>
        <position position="413"/>
    </location>
    <ligand>
        <name>ATP</name>
        <dbReference type="ChEBI" id="CHEBI:30616"/>
    </ligand>
</feature>
<feature type="binding site" evidence="1">
    <location>
        <position position="495"/>
    </location>
    <ligand>
        <name>ATP</name>
        <dbReference type="ChEBI" id="CHEBI:30616"/>
    </ligand>
</feature>
<proteinExistence type="inferred from homology"/>
<evidence type="ECO:0000255" key="1">
    <source>
        <dbReference type="HAMAP-Rule" id="MF_00600"/>
    </source>
</evidence>
<dbReference type="EC" id="5.6.1.7" evidence="1"/>
<dbReference type="EMBL" id="CP000924">
    <property type="protein sequence ID" value="ABY95358.1"/>
    <property type="molecule type" value="Genomic_DNA"/>
</dbReference>
<dbReference type="RefSeq" id="WP_003866816.1">
    <property type="nucleotide sequence ID" value="NC_010321.1"/>
</dbReference>
<dbReference type="SMR" id="B0KBR3"/>
<dbReference type="STRING" id="340099.Teth39_1721"/>
<dbReference type="KEGG" id="tpd:Teth39_1721"/>
<dbReference type="eggNOG" id="COG0459">
    <property type="taxonomic scope" value="Bacteria"/>
</dbReference>
<dbReference type="HOGENOM" id="CLU_016503_3_0_9"/>
<dbReference type="Proteomes" id="UP000002156">
    <property type="component" value="Chromosome"/>
</dbReference>
<dbReference type="GO" id="GO:0005737">
    <property type="term" value="C:cytoplasm"/>
    <property type="evidence" value="ECO:0007669"/>
    <property type="project" value="UniProtKB-SubCell"/>
</dbReference>
<dbReference type="GO" id="GO:0005524">
    <property type="term" value="F:ATP binding"/>
    <property type="evidence" value="ECO:0007669"/>
    <property type="project" value="UniProtKB-UniRule"/>
</dbReference>
<dbReference type="GO" id="GO:0140662">
    <property type="term" value="F:ATP-dependent protein folding chaperone"/>
    <property type="evidence" value="ECO:0007669"/>
    <property type="project" value="InterPro"/>
</dbReference>
<dbReference type="GO" id="GO:0016853">
    <property type="term" value="F:isomerase activity"/>
    <property type="evidence" value="ECO:0007669"/>
    <property type="project" value="UniProtKB-KW"/>
</dbReference>
<dbReference type="GO" id="GO:0051082">
    <property type="term" value="F:unfolded protein binding"/>
    <property type="evidence" value="ECO:0007669"/>
    <property type="project" value="UniProtKB-UniRule"/>
</dbReference>
<dbReference type="GO" id="GO:0042026">
    <property type="term" value="P:protein refolding"/>
    <property type="evidence" value="ECO:0007669"/>
    <property type="project" value="UniProtKB-UniRule"/>
</dbReference>
<dbReference type="CDD" id="cd03344">
    <property type="entry name" value="GroEL"/>
    <property type="match status" value="1"/>
</dbReference>
<dbReference type="FunFam" id="3.50.7.10:FF:000001">
    <property type="entry name" value="60 kDa chaperonin"/>
    <property type="match status" value="1"/>
</dbReference>
<dbReference type="Gene3D" id="3.50.7.10">
    <property type="entry name" value="GroEL"/>
    <property type="match status" value="1"/>
</dbReference>
<dbReference type="Gene3D" id="1.10.560.10">
    <property type="entry name" value="GroEL-like equatorial domain"/>
    <property type="match status" value="1"/>
</dbReference>
<dbReference type="Gene3D" id="3.30.260.10">
    <property type="entry name" value="TCP-1-like chaperonin intermediate domain"/>
    <property type="match status" value="1"/>
</dbReference>
<dbReference type="HAMAP" id="MF_00600">
    <property type="entry name" value="CH60"/>
    <property type="match status" value="1"/>
</dbReference>
<dbReference type="InterPro" id="IPR018370">
    <property type="entry name" value="Chaperonin_Cpn60_CS"/>
</dbReference>
<dbReference type="InterPro" id="IPR001844">
    <property type="entry name" value="Cpn60/GroEL"/>
</dbReference>
<dbReference type="InterPro" id="IPR002423">
    <property type="entry name" value="Cpn60/GroEL/TCP-1"/>
</dbReference>
<dbReference type="InterPro" id="IPR027409">
    <property type="entry name" value="GroEL-like_apical_dom_sf"/>
</dbReference>
<dbReference type="InterPro" id="IPR027413">
    <property type="entry name" value="GROEL-like_equatorial_sf"/>
</dbReference>
<dbReference type="InterPro" id="IPR027410">
    <property type="entry name" value="TCP-1-like_intermed_sf"/>
</dbReference>
<dbReference type="NCBIfam" id="TIGR02348">
    <property type="entry name" value="GroEL"/>
    <property type="match status" value="1"/>
</dbReference>
<dbReference type="NCBIfam" id="NF000592">
    <property type="entry name" value="PRK00013.1"/>
    <property type="match status" value="1"/>
</dbReference>
<dbReference type="NCBIfam" id="NF009487">
    <property type="entry name" value="PRK12849.1"/>
    <property type="match status" value="1"/>
</dbReference>
<dbReference type="NCBIfam" id="NF009488">
    <property type="entry name" value="PRK12850.1"/>
    <property type="match status" value="1"/>
</dbReference>
<dbReference type="NCBIfam" id="NF009489">
    <property type="entry name" value="PRK12851.1"/>
    <property type="match status" value="1"/>
</dbReference>
<dbReference type="PANTHER" id="PTHR45633">
    <property type="entry name" value="60 KDA HEAT SHOCK PROTEIN, MITOCHONDRIAL"/>
    <property type="match status" value="1"/>
</dbReference>
<dbReference type="Pfam" id="PF00118">
    <property type="entry name" value="Cpn60_TCP1"/>
    <property type="match status" value="1"/>
</dbReference>
<dbReference type="PRINTS" id="PR00298">
    <property type="entry name" value="CHAPERONIN60"/>
</dbReference>
<dbReference type="SUPFAM" id="SSF52029">
    <property type="entry name" value="GroEL apical domain-like"/>
    <property type="match status" value="1"/>
</dbReference>
<dbReference type="SUPFAM" id="SSF48592">
    <property type="entry name" value="GroEL equatorial domain-like"/>
    <property type="match status" value="1"/>
</dbReference>
<dbReference type="SUPFAM" id="SSF54849">
    <property type="entry name" value="GroEL-intermediate domain like"/>
    <property type="match status" value="1"/>
</dbReference>
<dbReference type="PROSITE" id="PS00296">
    <property type="entry name" value="CHAPERONINS_CPN60"/>
    <property type="match status" value="1"/>
</dbReference>
<organism>
    <name type="scientific">Thermoanaerobacter pseudethanolicus (strain ATCC 33223 / 39E)</name>
    <name type="common">Clostridium thermohydrosulfuricum</name>
    <dbReference type="NCBI Taxonomy" id="340099"/>
    <lineage>
        <taxon>Bacteria</taxon>
        <taxon>Bacillati</taxon>
        <taxon>Bacillota</taxon>
        <taxon>Clostridia</taxon>
        <taxon>Thermoanaerobacterales</taxon>
        <taxon>Thermoanaerobacteraceae</taxon>
        <taxon>Thermoanaerobacter</taxon>
    </lineage>
</organism>
<name>CH60_THEP3</name>
<sequence>MAKQIKYGEEARRALERGVNAVADTVKVTLGPRGRNVVLDKKYGSPTVTNDGVTIAREIELEDPFENQGAQLLKEVATKTNDVAGDGTTTATLLAQAMVREGLKNLAAGANPMLLRRGIAKAVDAAVEGLKRISKPIDNKESIAHVASISAADEEIGNLIAEAMDKVGKDGVITVEESKTLGTTLEVVEGMQFDRGYISPYMVTDAEKMEAVLEEPVILITDKKLSNIQDLLPLLEQVVQHGKKLLIIADDVEGEALATLVVNKLRGTFTCVAVKAPGFGDRRKEMLQDIAILTGGQVISEELGYDLKDVRLDMLGRARQVKVTKENTTIVGGAGDAAEIKKRVNQIKAQIEETTSDYDREKLQERLAKLAGGVAVIQAGAATETELKEKKHRIEDALAATKAAVEEGIVPGGGIALLNVIEDVQKVVDSLDGDFKTGAKIVLRALEEPVRQIAANAGVDGSVIVEKIKAAKDPNFGYDAYKEEFTDMFKAGIVDPTKVTRTALQNAASIASMILTTEAVVVDVPEKNTAMPNPGAGMDMM</sequence>
<accession>B0KBR3</accession>
<keyword id="KW-0067">ATP-binding</keyword>
<keyword id="KW-0143">Chaperone</keyword>
<keyword id="KW-0963">Cytoplasm</keyword>
<keyword id="KW-0413">Isomerase</keyword>
<keyword id="KW-0547">Nucleotide-binding</keyword>
<keyword id="KW-1185">Reference proteome</keyword>
<protein>
    <recommendedName>
        <fullName evidence="1">Chaperonin GroEL</fullName>
        <ecNumber evidence="1">5.6.1.7</ecNumber>
    </recommendedName>
    <alternativeName>
        <fullName evidence="1">60 kDa chaperonin</fullName>
    </alternativeName>
    <alternativeName>
        <fullName evidence="1">Chaperonin-60</fullName>
        <shortName evidence="1">Cpn60</shortName>
    </alternativeName>
</protein>
<comment type="function">
    <text evidence="1">Together with its co-chaperonin GroES, plays an essential role in assisting protein folding. The GroEL-GroES system forms a nano-cage that allows encapsulation of the non-native substrate proteins and provides a physical environment optimized to promote and accelerate protein folding.</text>
</comment>
<comment type="catalytic activity">
    <reaction evidence="1">
        <text>ATP + H2O + a folded polypeptide = ADP + phosphate + an unfolded polypeptide.</text>
        <dbReference type="EC" id="5.6.1.7"/>
    </reaction>
</comment>
<comment type="subunit">
    <text evidence="1">Forms a cylinder of 14 subunits composed of two heptameric rings stacked back-to-back. Interacts with the co-chaperonin GroES.</text>
</comment>
<comment type="subcellular location">
    <subcellularLocation>
        <location evidence="1">Cytoplasm</location>
    </subcellularLocation>
</comment>
<comment type="similarity">
    <text evidence="1">Belongs to the chaperonin (HSP60) family.</text>
</comment>
<reference key="1">
    <citation type="submission" date="2008-01" db="EMBL/GenBank/DDBJ databases">
        <title>Complete sequence of Thermoanaerobacter pseudethanolicus 39E.</title>
        <authorList>
            <person name="Copeland A."/>
            <person name="Lucas S."/>
            <person name="Lapidus A."/>
            <person name="Barry K."/>
            <person name="Glavina del Rio T."/>
            <person name="Dalin E."/>
            <person name="Tice H."/>
            <person name="Pitluck S."/>
            <person name="Bruce D."/>
            <person name="Goodwin L."/>
            <person name="Saunders E."/>
            <person name="Brettin T."/>
            <person name="Detter J.C."/>
            <person name="Han C."/>
            <person name="Schmutz J."/>
            <person name="Larimer F."/>
            <person name="Land M."/>
            <person name="Hauser L."/>
            <person name="Kyrpides N."/>
            <person name="Lykidis A."/>
            <person name="Hemme C."/>
            <person name="Fields M.W."/>
            <person name="He Z."/>
            <person name="Zhou J."/>
            <person name="Richardson P."/>
        </authorList>
    </citation>
    <scope>NUCLEOTIDE SEQUENCE [LARGE SCALE GENOMIC DNA]</scope>
    <source>
        <strain>ATCC 33223 / DSM 2355 / 39E</strain>
    </source>
</reference>